<comment type="function">
    <text evidence="4">Plays a role in mediating Ca(2+) influx following depletion of intracellular Ca(2+) stores.</text>
</comment>
<comment type="interaction">
    <interactant intactId="EBI-109721">
        <id>P83094</id>
    </interactant>
    <interactant intactId="EBI-118501">
        <id>Q9U6B8</id>
        <label>Orai</label>
    </interactant>
    <organismsDiffer>false</organismsDiffer>
    <experiments>4</experiments>
</comment>
<comment type="subcellular location">
    <subcellularLocation>
        <location evidence="7">Cell membrane</location>
        <topology evidence="7">Single-pass type I membrane protein</topology>
    </subcellularLocation>
</comment>
<gene>
    <name type="primary">Stim</name>
    <name type="ORF">CG9126</name>
</gene>
<reference key="1">
    <citation type="journal article" date="2001" name="Biochem. J.">
        <title>Identification and characterization of the STIM (stromal interaction molecule) gene family: coding for a novel class of transmembrane proteins.</title>
        <authorList>
            <person name="Williams R.T."/>
            <person name="Manji S.S.M."/>
            <person name="Parker N.J."/>
            <person name="Hancock M.S."/>
            <person name="van Stekelenburg L."/>
            <person name="Eid J.-P."/>
            <person name="Senior P.V."/>
            <person name="Kazenwadel J.S."/>
            <person name="Shandala T."/>
            <person name="Saint R."/>
            <person name="Smith P.J."/>
            <person name="Dziadek M.A."/>
        </authorList>
    </citation>
    <scope>NUCLEOTIDE SEQUENCE [MRNA]</scope>
</reference>
<reference key="2">
    <citation type="journal article" date="2000" name="Science">
        <title>The genome sequence of Drosophila melanogaster.</title>
        <authorList>
            <person name="Adams M.D."/>
            <person name="Celniker S.E."/>
            <person name="Holt R.A."/>
            <person name="Evans C.A."/>
            <person name="Gocayne J.D."/>
            <person name="Amanatides P.G."/>
            <person name="Scherer S.E."/>
            <person name="Li P.W."/>
            <person name="Hoskins R.A."/>
            <person name="Galle R.F."/>
            <person name="George R.A."/>
            <person name="Lewis S.E."/>
            <person name="Richards S."/>
            <person name="Ashburner M."/>
            <person name="Henderson S.N."/>
            <person name="Sutton G.G."/>
            <person name="Wortman J.R."/>
            <person name="Yandell M.D."/>
            <person name="Zhang Q."/>
            <person name="Chen L.X."/>
            <person name="Brandon R.C."/>
            <person name="Rogers Y.-H.C."/>
            <person name="Blazej R.G."/>
            <person name="Champe M."/>
            <person name="Pfeiffer B.D."/>
            <person name="Wan K.H."/>
            <person name="Doyle C."/>
            <person name="Baxter E.G."/>
            <person name="Helt G."/>
            <person name="Nelson C.R."/>
            <person name="Miklos G.L.G."/>
            <person name="Abril J.F."/>
            <person name="Agbayani A."/>
            <person name="An H.-J."/>
            <person name="Andrews-Pfannkoch C."/>
            <person name="Baldwin D."/>
            <person name="Ballew R.M."/>
            <person name="Basu A."/>
            <person name="Baxendale J."/>
            <person name="Bayraktaroglu L."/>
            <person name="Beasley E.M."/>
            <person name="Beeson K.Y."/>
            <person name="Benos P.V."/>
            <person name="Berman B.P."/>
            <person name="Bhandari D."/>
            <person name="Bolshakov S."/>
            <person name="Borkova D."/>
            <person name="Botchan M.R."/>
            <person name="Bouck J."/>
            <person name="Brokstein P."/>
            <person name="Brottier P."/>
            <person name="Burtis K.C."/>
            <person name="Busam D.A."/>
            <person name="Butler H."/>
            <person name="Cadieu E."/>
            <person name="Center A."/>
            <person name="Chandra I."/>
            <person name="Cherry J.M."/>
            <person name="Cawley S."/>
            <person name="Dahlke C."/>
            <person name="Davenport L.B."/>
            <person name="Davies P."/>
            <person name="de Pablos B."/>
            <person name="Delcher A."/>
            <person name="Deng Z."/>
            <person name="Mays A.D."/>
            <person name="Dew I."/>
            <person name="Dietz S.M."/>
            <person name="Dodson K."/>
            <person name="Doup L.E."/>
            <person name="Downes M."/>
            <person name="Dugan-Rocha S."/>
            <person name="Dunkov B.C."/>
            <person name="Dunn P."/>
            <person name="Durbin K.J."/>
            <person name="Evangelista C.C."/>
            <person name="Ferraz C."/>
            <person name="Ferriera S."/>
            <person name="Fleischmann W."/>
            <person name="Fosler C."/>
            <person name="Gabrielian A.E."/>
            <person name="Garg N.S."/>
            <person name="Gelbart W.M."/>
            <person name="Glasser K."/>
            <person name="Glodek A."/>
            <person name="Gong F."/>
            <person name="Gorrell J.H."/>
            <person name="Gu Z."/>
            <person name="Guan P."/>
            <person name="Harris M."/>
            <person name="Harris N.L."/>
            <person name="Harvey D.A."/>
            <person name="Heiman T.J."/>
            <person name="Hernandez J.R."/>
            <person name="Houck J."/>
            <person name="Hostin D."/>
            <person name="Houston K.A."/>
            <person name="Howland T.J."/>
            <person name="Wei M.-H."/>
            <person name="Ibegwam C."/>
            <person name="Jalali M."/>
            <person name="Kalush F."/>
            <person name="Karpen G.H."/>
            <person name="Ke Z."/>
            <person name="Kennison J.A."/>
            <person name="Ketchum K.A."/>
            <person name="Kimmel B.E."/>
            <person name="Kodira C.D."/>
            <person name="Kraft C.L."/>
            <person name="Kravitz S."/>
            <person name="Kulp D."/>
            <person name="Lai Z."/>
            <person name="Lasko P."/>
            <person name="Lei Y."/>
            <person name="Levitsky A.A."/>
            <person name="Li J.H."/>
            <person name="Li Z."/>
            <person name="Liang Y."/>
            <person name="Lin X."/>
            <person name="Liu X."/>
            <person name="Mattei B."/>
            <person name="McIntosh T.C."/>
            <person name="McLeod M.P."/>
            <person name="McPherson D."/>
            <person name="Merkulov G."/>
            <person name="Milshina N.V."/>
            <person name="Mobarry C."/>
            <person name="Morris J."/>
            <person name="Moshrefi A."/>
            <person name="Mount S.M."/>
            <person name="Moy M."/>
            <person name="Murphy B."/>
            <person name="Murphy L."/>
            <person name="Muzny D.M."/>
            <person name="Nelson D.L."/>
            <person name="Nelson D.R."/>
            <person name="Nelson K.A."/>
            <person name="Nixon K."/>
            <person name="Nusskern D.R."/>
            <person name="Pacleb J.M."/>
            <person name="Palazzolo M."/>
            <person name="Pittman G.S."/>
            <person name="Pan S."/>
            <person name="Pollard J."/>
            <person name="Puri V."/>
            <person name="Reese M.G."/>
            <person name="Reinert K."/>
            <person name="Remington K."/>
            <person name="Saunders R.D.C."/>
            <person name="Scheeler F."/>
            <person name="Shen H."/>
            <person name="Shue B.C."/>
            <person name="Siden-Kiamos I."/>
            <person name="Simpson M."/>
            <person name="Skupski M.P."/>
            <person name="Smith T.J."/>
            <person name="Spier E."/>
            <person name="Spradling A.C."/>
            <person name="Stapleton M."/>
            <person name="Strong R."/>
            <person name="Sun E."/>
            <person name="Svirskas R."/>
            <person name="Tector C."/>
            <person name="Turner R."/>
            <person name="Venter E."/>
            <person name="Wang A.H."/>
            <person name="Wang X."/>
            <person name="Wang Z.-Y."/>
            <person name="Wassarman D.A."/>
            <person name="Weinstock G.M."/>
            <person name="Weissenbach J."/>
            <person name="Williams S.M."/>
            <person name="Woodage T."/>
            <person name="Worley K.C."/>
            <person name="Wu D."/>
            <person name="Yang S."/>
            <person name="Yao Q.A."/>
            <person name="Ye J."/>
            <person name="Yeh R.-F."/>
            <person name="Zaveri J.S."/>
            <person name="Zhan M."/>
            <person name="Zhang G."/>
            <person name="Zhao Q."/>
            <person name="Zheng L."/>
            <person name="Zheng X.H."/>
            <person name="Zhong F.N."/>
            <person name="Zhong W."/>
            <person name="Zhou X."/>
            <person name="Zhu S.C."/>
            <person name="Zhu X."/>
            <person name="Smith H.O."/>
            <person name="Gibbs R.A."/>
            <person name="Myers E.W."/>
            <person name="Rubin G.M."/>
            <person name="Venter J.C."/>
        </authorList>
    </citation>
    <scope>NUCLEOTIDE SEQUENCE [LARGE SCALE GENOMIC DNA]</scope>
    <source>
        <strain>Berkeley</strain>
    </source>
</reference>
<reference key="3">
    <citation type="journal article" date="2002" name="Genome Biol.">
        <title>Annotation of the Drosophila melanogaster euchromatic genome: a systematic review.</title>
        <authorList>
            <person name="Misra S."/>
            <person name="Crosby M.A."/>
            <person name="Mungall C.J."/>
            <person name="Matthews B.B."/>
            <person name="Campbell K.S."/>
            <person name="Hradecky P."/>
            <person name="Huang Y."/>
            <person name="Kaminker J.S."/>
            <person name="Millburn G.H."/>
            <person name="Prochnik S.E."/>
            <person name="Smith C.D."/>
            <person name="Tupy J.L."/>
            <person name="Whitfield E.J."/>
            <person name="Bayraktaroglu L."/>
            <person name="Berman B.P."/>
            <person name="Bettencourt B.R."/>
            <person name="Celniker S.E."/>
            <person name="de Grey A.D.N.J."/>
            <person name="Drysdale R.A."/>
            <person name="Harris N.L."/>
            <person name="Richter J."/>
            <person name="Russo S."/>
            <person name="Schroeder A.J."/>
            <person name="Shu S.Q."/>
            <person name="Stapleton M."/>
            <person name="Yamada C."/>
            <person name="Ashburner M."/>
            <person name="Gelbart W.M."/>
            <person name="Rubin G.M."/>
            <person name="Lewis S.E."/>
        </authorList>
    </citation>
    <scope>GENOME REANNOTATION</scope>
    <source>
        <strain>Berkeley</strain>
    </source>
</reference>
<reference key="4">
    <citation type="journal article" date="2002" name="Genome Biol.">
        <title>A Drosophila full-length cDNA resource.</title>
        <authorList>
            <person name="Stapleton M."/>
            <person name="Carlson J.W."/>
            <person name="Brokstein P."/>
            <person name="Yu C."/>
            <person name="Champe M."/>
            <person name="George R.A."/>
            <person name="Guarin H."/>
            <person name="Kronmiller B."/>
            <person name="Pacleb J.M."/>
            <person name="Park S."/>
            <person name="Wan K.H."/>
            <person name="Rubin G.M."/>
            <person name="Celniker S.E."/>
        </authorList>
    </citation>
    <scope>NUCLEOTIDE SEQUENCE [LARGE SCALE MRNA]</scope>
    <source>
        <strain>Berkeley</strain>
        <tissue>Embryo</tissue>
    </source>
</reference>
<reference key="5">
    <citation type="journal article" date="2005" name="J. Cell Biol.">
        <title>STIM1, an essential and conserved component of store-operated Ca2+ channel function.</title>
        <authorList>
            <person name="Roos J."/>
            <person name="DiGregorio P.J."/>
            <person name="Yeromin A.V."/>
            <person name="Ohlsen K."/>
            <person name="Lioudyno M."/>
            <person name="Zhang S."/>
            <person name="Safrina O."/>
            <person name="Kozak J.A."/>
            <person name="Wagner S.L."/>
            <person name="Cahalan M.D."/>
            <person name="Velicelebi G."/>
            <person name="Stauderman K.A."/>
        </authorList>
    </citation>
    <scope>FUNCTION</scope>
</reference>
<reference key="6">
    <citation type="journal article" date="2005" name="Nature">
        <title>STIM1 is a Ca2+ sensor that activates CRAC channels and migrates from the Ca2+ store to the plasma membrane.</title>
        <authorList>
            <person name="Zhang S.L."/>
            <person name="Yu Y."/>
            <person name="Roos J."/>
            <person name="Kozak J.A."/>
            <person name="Deerinck T.J."/>
            <person name="Ellisman M.H."/>
            <person name="Stauderman K.A."/>
            <person name="Cahalan M.D."/>
        </authorList>
    </citation>
    <scope>MUTAGENESIS OF ASP-155; ASP-157 AND GLU-166</scope>
</reference>
<reference key="7">
    <citation type="journal article" date="2008" name="J. Proteome Res.">
        <title>Phosphoproteome analysis of Drosophila melanogaster embryos.</title>
        <authorList>
            <person name="Zhai B."/>
            <person name="Villen J."/>
            <person name="Beausoleil S.A."/>
            <person name="Mintseris J."/>
            <person name="Gygi S.P."/>
        </authorList>
    </citation>
    <scope>PHOSPHORYLATION [LARGE SCALE ANALYSIS] AT SER-539 AND SER-546</scope>
    <scope>IDENTIFICATION BY MASS SPECTROMETRY</scope>
    <source>
        <tissue>Embryo</tissue>
    </source>
</reference>
<name>STIM_DROME</name>
<dbReference type="EMBL" id="AF328906">
    <property type="protein sequence ID" value="AAK82338.1"/>
    <property type="molecule type" value="mRNA"/>
</dbReference>
<dbReference type="EMBL" id="AE014298">
    <property type="protein sequence ID" value="AAF48542.2"/>
    <property type="molecule type" value="Genomic_DNA"/>
</dbReference>
<dbReference type="EMBL" id="AY069686">
    <property type="protein sequence ID" value="AAL39831.1"/>
    <property type="molecule type" value="mRNA"/>
</dbReference>
<dbReference type="RefSeq" id="NP_523357.2">
    <property type="nucleotide sequence ID" value="NM_078633.4"/>
</dbReference>
<dbReference type="SMR" id="P83094"/>
<dbReference type="BioGRID" id="58902">
    <property type="interactions" value="31"/>
</dbReference>
<dbReference type="ComplexPortal" id="CPX-2402">
    <property type="entry name" value="Calcium release-activated calcium channel"/>
</dbReference>
<dbReference type="DIP" id="DIP-22915N"/>
<dbReference type="FunCoup" id="P83094">
    <property type="interactions" value="1505"/>
</dbReference>
<dbReference type="IntAct" id="P83094">
    <property type="interactions" value="18"/>
</dbReference>
<dbReference type="STRING" id="7227.FBpp0073955"/>
<dbReference type="GlyCosmos" id="P83094">
    <property type="glycosylation" value="1 site, No reported glycans"/>
</dbReference>
<dbReference type="GlyGen" id="P83094">
    <property type="glycosylation" value="2 sites, 1 O-linked glycan (1 site)"/>
</dbReference>
<dbReference type="iPTMnet" id="P83094"/>
<dbReference type="PaxDb" id="7227-FBpp0073955"/>
<dbReference type="DNASU" id="32556"/>
<dbReference type="EnsemblMetazoa" id="FBtr0074159">
    <property type="protein sequence ID" value="FBpp0073955"/>
    <property type="gene ID" value="FBgn0045073"/>
</dbReference>
<dbReference type="GeneID" id="32556"/>
<dbReference type="KEGG" id="dme:Dmel_CG9126"/>
<dbReference type="AGR" id="FB:FBgn0045073"/>
<dbReference type="CTD" id="32556"/>
<dbReference type="FlyBase" id="FBgn0045073">
    <property type="gene designation" value="Stim"/>
</dbReference>
<dbReference type="VEuPathDB" id="VectorBase:FBgn0045073"/>
<dbReference type="eggNOG" id="KOG4403">
    <property type="taxonomic scope" value="Eukaryota"/>
</dbReference>
<dbReference type="GeneTree" id="ENSGT00390000000214"/>
<dbReference type="HOGENOM" id="CLU_010588_1_0_1"/>
<dbReference type="InParanoid" id="P83094"/>
<dbReference type="OMA" id="FLCCVLK"/>
<dbReference type="OrthoDB" id="9986177at2759"/>
<dbReference type="PhylomeDB" id="P83094"/>
<dbReference type="Reactome" id="R-DME-5578775">
    <property type="pathway name" value="Ion homeostasis"/>
</dbReference>
<dbReference type="Reactome" id="R-DME-983695">
    <property type="pathway name" value="Antigen activates B Cell Receptor (BCR) leading to generation of second messengers"/>
</dbReference>
<dbReference type="SignaLink" id="P83094"/>
<dbReference type="BioGRID-ORCS" id="32556">
    <property type="hits" value="0 hits in 3 CRISPR screens"/>
</dbReference>
<dbReference type="ChiTaRS" id="Ranbp16">
    <property type="organism name" value="fly"/>
</dbReference>
<dbReference type="GenomeRNAi" id="32556"/>
<dbReference type="PRO" id="PR:P83094"/>
<dbReference type="Proteomes" id="UP000000803">
    <property type="component" value="Chromosome X"/>
</dbReference>
<dbReference type="Bgee" id="FBgn0045073">
    <property type="expression patterns" value="Expressed in oviduct (Drosophila) and 215 other cell types or tissues"/>
</dbReference>
<dbReference type="ExpressionAtlas" id="P83094">
    <property type="expression patterns" value="baseline and differential"/>
</dbReference>
<dbReference type="GO" id="GO:0012505">
    <property type="term" value="C:endomembrane system"/>
    <property type="evidence" value="ECO:0007005"/>
    <property type="project" value="FlyBase"/>
</dbReference>
<dbReference type="GO" id="GO:0005783">
    <property type="term" value="C:endoplasmic reticulum"/>
    <property type="evidence" value="ECO:0000318"/>
    <property type="project" value="GO_Central"/>
</dbReference>
<dbReference type="GO" id="GO:0005789">
    <property type="term" value="C:endoplasmic reticulum membrane"/>
    <property type="evidence" value="ECO:0000304"/>
    <property type="project" value="Reactome"/>
</dbReference>
<dbReference type="GO" id="GO:0140268">
    <property type="term" value="C:endoplasmic reticulum-plasma membrane contact site"/>
    <property type="evidence" value="ECO:0000314"/>
    <property type="project" value="FlyBase"/>
</dbReference>
<dbReference type="GO" id="GO:0016020">
    <property type="term" value="C:membrane"/>
    <property type="evidence" value="ECO:0000303"/>
    <property type="project" value="UniProtKB"/>
</dbReference>
<dbReference type="GO" id="GO:0005886">
    <property type="term" value="C:plasma membrane"/>
    <property type="evidence" value="ECO:0000318"/>
    <property type="project" value="GO_Central"/>
</dbReference>
<dbReference type="GO" id="GO:0005246">
    <property type="term" value="F:calcium channel regulator activity"/>
    <property type="evidence" value="ECO:0000318"/>
    <property type="project" value="GO_Central"/>
</dbReference>
<dbReference type="GO" id="GO:0005509">
    <property type="term" value="F:calcium ion binding"/>
    <property type="evidence" value="ECO:0000314"/>
    <property type="project" value="UniProtKB"/>
</dbReference>
<dbReference type="GO" id="GO:0048763">
    <property type="term" value="F:calcium-induced calcium release activity"/>
    <property type="evidence" value="ECO:0000315"/>
    <property type="project" value="FlyBase"/>
</dbReference>
<dbReference type="GO" id="GO:0015279">
    <property type="term" value="F:store-operated calcium channel activity"/>
    <property type="evidence" value="ECO:0000315"/>
    <property type="project" value="FlyBase"/>
</dbReference>
<dbReference type="GO" id="GO:0022416">
    <property type="term" value="P:chaeta development"/>
    <property type="evidence" value="ECO:0000315"/>
    <property type="project" value="FlyBase"/>
</dbReference>
<dbReference type="GO" id="GO:0005513">
    <property type="term" value="P:detection of calcium ion"/>
    <property type="evidence" value="ECO:0000314"/>
    <property type="project" value="UniProtKB"/>
</dbReference>
<dbReference type="GO" id="GO:0007476">
    <property type="term" value="P:imaginal disc-derived wing morphogenesis"/>
    <property type="evidence" value="ECO:0000315"/>
    <property type="project" value="FlyBase"/>
</dbReference>
<dbReference type="GO" id="GO:0006874">
    <property type="term" value="P:intracellular calcium ion homeostasis"/>
    <property type="evidence" value="ECO:0000318"/>
    <property type="project" value="GO_Central"/>
</dbReference>
<dbReference type="GO" id="GO:0051924">
    <property type="term" value="P:regulation of calcium ion transport"/>
    <property type="evidence" value="ECO:0000314"/>
    <property type="project" value="UniProtKB"/>
</dbReference>
<dbReference type="GO" id="GO:0002115">
    <property type="term" value="P:store-operated calcium entry"/>
    <property type="evidence" value="ECO:0000315"/>
    <property type="project" value="FlyBase"/>
</dbReference>
<dbReference type="CDD" id="cd09504">
    <property type="entry name" value="SAM_STIM-1_2-like"/>
    <property type="match status" value="1"/>
</dbReference>
<dbReference type="CDD" id="cd11722">
    <property type="entry name" value="SOAR"/>
    <property type="match status" value="1"/>
</dbReference>
<dbReference type="FunFam" id="1.20.5.340:FF:000033">
    <property type="entry name" value="Stromal interaction molecule"/>
    <property type="match status" value="1"/>
</dbReference>
<dbReference type="FunFam" id="1.10.150.50:FF:000009">
    <property type="entry name" value="Stromal interaction molecule 1"/>
    <property type="match status" value="1"/>
</dbReference>
<dbReference type="FunFam" id="1.10.238.180:FF:000001">
    <property type="entry name" value="Stromal interaction molecule 1"/>
    <property type="match status" value="1"/>
</dbReference>
<dbReference type="FunFam" id="1.10.287.3550:FF:000002">
    <property type="entry name" value="Stromal interaction molecule homolog"/>
    <property type="match status" value="1"/>
</dbReference>
<dbReference type="Gene3D" id="1.10.238.180">
    <property type="match status" value="1"/>
</dbReference>
<dbReference type="Gene3D" id="1.10.287.3550">
    <property type="match status" value="1"/>
</dbReference>
<dbReference type="Gene3D" id="1.20.5.340">
    <property type="match status" value="1"/>
</dbReference>
<dbReference type="Gene3D" id="1.10.150.50">
    <property type="entry name" value="Transcription Factor, Ets-1"/>
    <property type="match status" value="1"/>
</dbReference>
<dbReference type="InterPro" id="IPR001660">
    <property type="entry name" value="SAM"/>
</dbReference>
<dbReference type="InterPro" id="IPR013761">
    <property type="entry name" value="SAM/pointed_sf"/>
</dbReference>
<dbReference type="InterPro" id="IPR032393">
    <property type="entry name" value="SOAR"/>
</dbReference>
<dbReference type="InterPro" id="IPR037608">
    <property type="entry name" value="STIM"/>
</dbReference>
<dbReference type="PANTHER" id="PTHR15136">
    <property type="entry name" value="STROMAL INTERACTION MOLECULE HOMOLOG"/>
    <property type="match status" value="1"/>
</dbReference>
<dbReference type="PANTHER" id="PTHR15136:SF5">
    <property type="entry name" value="STROMAL INTERACTION MOLECULE HOMOLOG"/>
    <property type="match status" value="1"/>
</dbReference>
<dbReference type="Pfam" id="PF07647">
    <property type="entry name" value="SAM_2"/>
    <property type="match status" value="1"/>
</dbReference>
<dbReference type="Pfam" id="PF16533">
    <property type="entry name" value="SOAR"/>
    <property type="match status" value="1"/>
</dbReference>
<dbReference type="SMART" id="SM00454">
    <property type="entry name" value="SAM"/>
    <property type="match status" value="1"/>
</dbReference>
<dbReference type="SUPFAM" id="SSF47769">
    <property type="entry name" value="SAM/Pointed domain"/>
    <property type="match status" value="1"/>
</dbReference>
<dbReference type="PROSITE" id="PS50105">
    <property type="entry name" value="SAM_DOMAIN"/>
    <property type="match status" value="1"/>
</dbReference>
<organism>
    <name type="scientific">Drosophila melanogaster</name>
    <name type="common">Fruit fly</name>
    <dbReference type="NCBI Taxonomy" id="7227"/>
    <lineage>
        <taxon>Eukaryota</taxon>
        <taxon>Metazoa</taxon>
        <taxon>Ecdysozoa</taxon>
        <taxon>Arthropoda</taxon>
        <taxon>Hexapoda</taxon>
        <taxon>Insecta</taxon>
        <taxon>Pterygota</taxon>
        <taxon>Neoptera</taxon>
        <taxon>Endopterygota</taxon>
        <taxon>Diptera</taxon>
        <taxon>Brachycera</taxon>
        <taxon>Muscomorpha</taxon>
        <taxon>Ephydroidea</taxon>
        <taxon>Drosophilidae</taxon>
        <taxon>Drosophila</taxon>
        <taxon>Sophophora</taxon>
    </lineage>
</organism>
<proteinExistence type="evidence at protein level"/>
<protein>
    <recommendedName>
        <fullName>Stromal interaction molecule homolog</fullName>
    </recommendedName>
</protein>
<keyword id="KW-0106">Calcium</keyword>
<keyword id="KW-0109">Calcium transport</keyword>
<keyword id="KW-1003">Cell membrane</keyword>
<keyword id="KW-0175">Coiled coil</keyword>
<keyword id="KW-0325">Glycoprotein</keyword>
<keyword id="KW-0406">Ion transport</keyword>
<keyword id="KW-0472">Membrane</keyword>
<keyword id="KW-0479">Metal-binding</keyword>
<keyword id="KW-0597">Phosphoprotein</keyword>
<keyword id="KW-1185">Reference proteome</keyword>
<keyword id="KW-0732">Signal</keyword>
<keyword id="KW-0812">Transmembrane</keyword>
<keyword id="KW-1133">Transmembrane helix</keyword>
<keyword id="KW-0813">Transport</keyword>
<accession>P83094</accession>
<accession>Q9VXL6</accession>
<sequence length="570" mass="64797">MRKNTIWNYSLIFFCCVLKSISTLDHGPHTVSVDSNRHNTQHQYKQNPNVASQRHSSHESGQSLHNSQSEHVTHIAASHAGSGGEHSTHLAQNLHRSSYNLLSEAMSQAVSNEFSSMGSGSADGACAADDFDCYSGSVQDRFGMEAIASLHRQLDDDDNGNIDLSESDDFLREELKYDSGYEKRQKAFHFNDDMHISVKELWEAWLRSEVHNWTIEQTTDWLAQSVQLPQYVDLFKLHKVTGAALPRLAVNNLQYVGNVLGIKDPIHKQKISLKAMDVVLFGPPRETGTRWKDYILVTLLLSAIIGCWYAYQQNKNAKRHLRRMAQDMEGLQRAEQSLQEMQKELERARMEQENVATEKLDLERRLKEAPTLSSSNSDLEVQQLKKEIEMLRNELSRAEFELVDNCWSPPPQLQSWLQYTYELESKNHQKKRTSAEKQLQSAREACEKLRKKRSSLVGAFVSTHGKSIDDVDRSIVEARNALGDVTNELQERLHRWKQIETCLGLNIVNNNGLPYLENVLYGRNGGLQSSMGMSSTKGSRARITNSTEDLDDESIQGKLNFENFSLLATE</sequence>
<evidence type="ECO:0000255" key="1"/>
<evidence type="ECO:0000255" key="2">
    <source>
        <dbReference type="PROSITE-ProRule" id="PRU00184"/>
    </source>
</evidence>
<evidence type="ECO:0000256" key="3">
    <source>
        <dbReference type="SAM" id="MobiDB-lite"/>
    </source>
</evidence>
<evidence type="ECO:0000269" key="4">
    <source>
    </source>
</evidence>
<evidence type="ECO:0000269" key="5">
    <source>
    </source>
</evidence>
<evidence type="ECO:0000269" key="6">
    <source>
    </source>
</evidence>
<evidence type="ECO:0000305" key="7"/>
<feature type="signal peptide" evidence="1">
    <location>
        <begin position="1"/>
        <end position="23"/>
    </location>
</feature>
<feature type="chain" id="PRO_0000033329" description="Stromal interaction molecule homolog">
    <location>
        <begin position="24"/>
        <end position="570"/>
    </location>
</feature>
<feature type="topological domain" description="Extracellular" evidence="1">
    <location>
        <begin position="24"/>
        <end position="294"/>
    </location>
</feature>
<feature type="transmembrane region" description="Helical" evidence="1">
    <location>
        <begin position="295"/>
        <end position="312"/>
    </location>
</feature>
<feature type="topological domain" description="Cytoplasmic" evidence="1">
    <location>
        <begin position="313"/>
        <end position="570"/>
    </location>
</feature>
<feature type="domain" description="EF-hand">
    <location>
        <begin position="142"/>
        <end position="177"/>
    </location>
</feature>
<feature type="domain" description="SAM" evidence="2">
    <location>
        <begin position="213"/>
        <end position="281"/>
    </location>
</feature>
<feature type="region of interest" description="Disordered" evidence="3">
    <location>
        <begin position="40"/>
        <end position="71"/>
    </location>
</feature>
<feature type="coiled-coil region" evidence="1">
    <location>
        <begin position="310"/>
        <end position="407"/>
    </location>
</feature>
<feature type="coiled-coil region" evidence="1">
    <location>
        <begin position="420"/>
        <end position="462"/>
    </location>
</feature>
<feature type="compositionally biased region" description="Polar residues" evidence="3">
    <location>
        <begin position="41"/>
        <end position="70"/>
    </location>
</feature>
<feature type="binding site" evidence="1">
    <location>
        <position position="155"/>
    </location>
    <ligand>
        <name>Ca(2+)</name>
        <dbReference type="ChEBI" id="CHEBI:29108"/>
    </ligand>
</feature>
<feature type="binding site" evidence="1">
    <location>
        <position position="157"/>
    </location>
    <ligand>
        <name>Ca(2+)</name>
        <dbReference type="ChEBI" id="CHEBI:29108"/>
    </ligand>
</feature>
<feature type="binding site" evidence="1">
    <location>
        <position position="159"/>
    </location>
    <ligand>
        <name>Ca(2+)</name>
        <dbReference type="ChEBI" id="CHEBI:29108"/>
    </ligand>
</feature>
<feature type="binding site" evidence="1">
    <location>
        <position position="161"/>
    </location>
    <ligand>
        <name>Ca(2+)</name>
        <dbReference type="ChEBI" id="CHEBI:29108"/>
    </ligand>
</feature>
<feature type="binding site" evidence="1">
    <location>
        <position position="166"/>
    </location>
    <ligand>
        <name>Ca(2+)</name>
        <dbReference type="ChEBI" id="CHEBI:29108"/>
    </ligand>
</feature>
<feature type="modified residue" description="Phosphoserine" evidence="6">
    <location>
        <position position="539"/>
    </location>
</feature>
<feature type="modified residue" description="Phosphoserine" evidence="6">
    <location>
        <position position="546"/>
    </location>
</feature>
<feature type="glycosylation site" description="N-linked (GlcNAc...) asparagine" evidence="1">
    <location>
        <position position="212"/>
    </location>
</feature>
<feature type="mutagenesis site" description="Increases Ca(2+) influx through activation of CRAC channels and arrests cell growth." evidence="5">
    <original>D</original>
    <variation>A</variation>
    <variation>N</variation>
    <location>
        <position position="155"/>
    </location>
</feature>
<feature type="mutagenesis site" description="Increases Ca(2+) influx through activation of CRAC channels and arrests cell growth." evidence="5">
    <original>D</original>
    <variation>A</variation>
    <variation>N</variation>
    <location>
        <position position="157"/>
    </location>
</feature>
<feature type="mutagenesis site" description="Increases Ca(2+) influx through activation of CRAC channels and arrests cell growth." evidence="5">
    <original>E</original>
    <variation>A</variation>
    <variation>Q</variation>
    <location>
        <position position="166"/>
    </location>
</feature>